<organism>
    <name type="scientific">Psychrobacter arcticus (strain DSM 17307 / VKM B-2377 / 273-4)</name>
    <dbReference type="NCBI Taxonomy" id="259536"/>
    <lineage>
        <taxon>Bacteria</taxon>
        <taxon>Pseudomonadati</taxon>
        <taxon>Pseudomonadota</taxon>
        <taxon>Gammaproteobacteria</taxon>
        <taxon>Moraxellales</taxon>
        <taxon>Moraxellaceae</taxon>
        <taxon>Psychrobacter</taxon>
    </lineage>
</organism>
<evidence type="ECO:0000255" key="1">
    <source>
        <dbReference type="HAMAP-Rule" id="MF_00318"/>
    </source>
</evidence>
<dbReference type="EC" id="4.2.1.11" evidence="1"/>
<dbReference type="EMBL" id="CP000082">
    <property type="protein sequence ID" value="AAZ19484.1"/>
    <property type="molecule type" value="Genomic_DNA"/>
</dbReference>
<dbReference type="RefSeq" id="WP_011280900.1">
    <property type="nucleotide sequence ID" value="NC_007204.1"/>
</dbReference>
<dbReference type="SMR" id="Q4FR74"/>
<dbReference type="STRING" id="259536.Psyc_1636"/>
<dbReference type="KEGG" id="par:Psyc_1636"/>
<dbReference type="eggNOG" id="COG0148">
    <property type="taxonomic scope" value="Bacteria"/>
</dbReference>
<dbReference type="HOGENOM" id="CLU_031223_2_1_6"/>
<dbReference type="OrthoDB" id="9804716at2"/>
<dbReference type="UniPathway" id="UPA00109">
    <property type="reaction ID" value="UER00187"/>
</dbReference>
<dbReference type="Proteomes" id="UP000000546">
    <property type="component" value="Chromosome"/>
</dbReference>
<dbReference type="GO" id="GO:0009986">
    <property type="term" value="C:cell surface"/>
    <property type="evidence" value="ECO:0007669"/>
    <property type="project" value="UniProtKB-SubCell"/>
</dbReference>
<dbReference type="GO" id="GO:0005576">
    <property type="term" value="C:extracellular region"/>
    <property type="evidence" value="ECO:0007669"/>
    <property type="project" value="UniProtKB-SubCell"/>
</dbReference>
<dbReference type="GO" id="GO:0000015">
    <property type="term" value="C:phosphopyruvate hydratase complex"/>
    <property type="evidence" value="ECO:0007669"/>
    <property type="project" value="InterPro"/>
</dbReference>
<dbReference type="GO" id="GO:0000287">
    <property type="term" value="F:magnesium ion binding"/>
    <property type="evidence" value="ECO:0007669"/>
    <property type="project" value="UniProtKB-UniRule"/>
</dbReference>
<dbReference type="GO" id="GO:0004634">
    <property type="term" value="F:phosphopyruvate hydratase activity"/>
    <property type="evidence" value="ECO:0007669"/>
    <property type="project" value="UniProtKB-UniRule"/>
</dbReference>
<dbReference type="GO" id="GO:0006096">
    <property type="term" value="P:glycolytic process"/>
    <property type="evidence" value="ECO:0007669"/>
    <property type="project" value="UniProtKB-UniRule"/>
</dbReference>
<dbReference type="CDD" id="cd03313">
    <property type="entry name" value="enolase"/>
    <property type="match status" value="1"/>
</dbReference>
<dbReference type="FunFam" id="3.20.20.120:FF:000001">
    <property type="entry name" value="Enolase"/>
    <property type="match status" value="1"/>
</dbReference>
<dbReference type="FunFam" id="3.30.390.10:FF:000001">
    <property type="entry name" value="Enolase"/>
    <property type="match status" value="1"/>
</dbReference>
<dbReference type="Gene3D" id="3.20.20.120">
    <property type="entry name" value="Enolase-like C-terminal domain"/>
    <property type="match status" value="1"/>
</dbReference>
<dbReference type="Gene3D" id="3.30.390.10">
    <property type="entry name" value="Enolase-like, N-terminal domain"/>
    <property type="match status" value="1"/>
</dbReference>
<dbReference type="HAMAP" id="MF_00318">
    <property type="entry name" value="Enolase"/>
    <property type="match status" value="1"/>
</dbReference>
<dbReference type="InterPro" id="IPR000941">
    <property type="entry name" value="Enolase"/>
</dbReference>
<dbReference type="InterPro" id="IPR036849">
    <property type="entry name" value="Enolase-like_C_sf"/>
</dbReference>
<dbReference type="InterPro" id="IPR029017">
    <property type="entry name" value="Enolase-like_N"/>
</dbReference>
<dbReference type="InterPro" id="IPR020810">
    <property type="entry name" value="Enolase_C"/>
</dbReference>
<dbReference type="InterPro" id="IPR020809">
    <property type="entry name" value="Enolase_CS"/>
</dbReference>
<dbReference type="InterPro" id="IPR020811">
    <property type="entry name" value="Enolase_N"/>
</dbReference>
<dbReference type="NCBIfam" id="TIGR01060">
    <property type="entry name" value="eno"/>
    <property type="match status" value="1"/>
</dbReference>
<dbReference type="PANTHER" id="PTHR11902">
    <property type="entry name" value="ENOLASE"/>
    <property type="match status" value="1"/>
</dbReference>
<dbReference type="PANTHER" id="PTHR11902:SF1">
    <property type="entry name" value="ENOLASE"/>
    <property type="match status" value="1"/>
</dbReference>
<dbReference type="Pfam" id="PF00113">
    <property type="entry name" value="Enolase_C"/>
    <property type="match status" value="1"/>
</dbReference>
<dbReference type="Pfam" id="PF03952">
    <property type="entry name" value="Enolase_N"/>
    <property type="match status" value="1"/>
</dbReference>
<dbReference type="PIRSF" id="PIRSF001400">
    <property type="entry name" value="Enolase"/>
    <property type="match status" value="1"/>
</dbReference>
<dbReference type="PRINTS" id="PR00148">
    <property type="entry name" value="ENOLASE"/>
</dbReference>
<dbReference type="SFLD" id="SFLDF00002">
    <property type="entry name" value="enolase"/>
    <property type="match status" value="1"/>
</dbReference>
<dbReference type="SFLD" id="SFLDG00178">
    <property type="entry name" value="enolase"/>
    <property type="match status" value="1"/>
</dbReference>
<dbReference type="SMART" id="SM01192">
    <property type="entry name" value="Enolase_C"/>
    <property type="match status" value="1"/>
</dbReference>
<dbReference type="SMART" id="SM01193">
    <property type="entry name" value="Enolase_N"/>
    <property type="match status" value="1"/>
</dbReference>
<dbReference type="SUPFAM" id="SSF51604">
    <property type="entry name" value="Enolase C-terminal domain-like"/>
    <property type="match status" value="1"/>
</dbReference>
<dbReference type="SUPFAM" id="SSF54826">
    <property type="entry name" value="Enolase N-terminal domain-like"/>
    <property type="match status" value="1"/>
</dbReference>
<dbReference type="PROSITE" id="PS00164">
    <property type="entry name" value="ENOLASE"/>
    <property type="match status" value="1"/>
</dbReference>
<gene>
    <name evidence="1" type="primary">eno</name>
    <name type="ordered locus">Psyc_1636</name>
</gene>
<name>ENO_PSYA2</name>
<proteinExistence type="inferred from homology"/>
<protein>
    <recommendedName>
        <fullName evidence="1">Enolase</fullName>
        <ecNumber evidence="1">4.2.1.11</ecNumber>
    </recommendedName>
    <alternativeName>
        <fullName evidence="1">2-phospho-D-glycerate hydro-lyase</fullName>
    </alternativeName>
    <alternativeName>
        <fullName evidence="1">2-phosphoglycerate dehydratase</fullName>
    </alternativeName>
</protein>
<reference key="1">
    <citation type="journal article" date="2010" name="Appl. Environ. Microbiol.">
        <title>The genome sequence of Psychrobacter arcticus 273-4, a psychroactive Siberian permafrost bacterium, reveals mechanisms for adaptation to low-temperature growth.</title>
        <authorList>
            <person name="Ayala-del-Rio H.L."/>
            <person name="Chain P.S."/>
            <person name="Grzymski J.J."/>
            <person name="Ponder M.A."/>
            <person name="Ivanova N."/>
            <person name="Bergholz P.W."/>
            <person name="Di Bartolo G."/>
            <person name="Hauser L."/>
            <person name="Land M."/>
            <person name="Bakermans C."/>
            <person name="Rodrigues D."/>
            <person name="Klappenbach J."/>
            <person name="Zarka D."/>
            <person name="Larimer F."/>
            <person name="Richardson P."/>
            <person name="Murray A."/>
            <person name="Thomashow M."/>
            <person name="Tiedje J.M."/>
        </authorList>
    </citation>
    <scope>NUCLEOTIDE SEQUENCE [LARGE SCALE GENOMIC DNA]</scope>
    <source>
        <strain>DSM 17307 / VKM B-2377 / 273-4</strain>
    </source>
</reference>
<sequence length="438" mass="47200">MYAEETNNVTAIKDIRAREILDSRGNPTIEADVILADGTIGRAAAPSGASTGSREALELRDGDKSRYMGKGVKKAVANVNSQIRSALMDKNVTAQQAIDDAMIALDGTDNKDNLGANAILAVSLAVAKAAAKSQSLPLHQYIADLRNQTSLTMPVPMMNIINGGEHADNTVDIQEFMIEPVGFSSFSEALRAGTEIFHSLKSVLKSQGLNTAVGDEGGFAPNLRSNEEAITVIMQAIEQVGYTAGKDIHLALDCAATEFYKDGKYILAGEGNKSFDSQGFSDYLVGLARQYPIISIEDGLDESDWDGWKYLTEQIGDKVQLVGDDLFVTNPAILQEGIDKHIANAILIKFNQIGTLSETLDAIYLAKKNGYATIISHRSGETEDSTIADLAVGTAAGQIKTGSLCRSDRVAKYNQLLRIEQQVRASYRGREEFIGLRG</sequence>
<feature type="chain" id="PRO_0000267081" description="Enolase">
    <location>
        <begin position="1"/>
        <end position="438"/>
    </location>
</feature>
<feature type="active site" description="Proton donor" evidence="1">
    <location>
        <position position="216"/>
    </location>
</feature>
<feature type="active site" description="Proton acceptor" evidence="1">
    <location>
        <position position="349"/>
    </location>
</feature>
<feature type="binding site" evidence="1">
    <location>
        <position position="174"/>
    </location>
    <ligand>
        <name>(2R)-2-phosphoglycerate</name>
        <dbReference type="ChEBI" id="CHEBI:58289"/>
    </ligand>
</feature>
<feature type="binding site" evidence="1">
    <location>
        <position position="253"/>
    </location>
    <ligand>
        <name>Mg(2+)</name>
        <dbReference type="ChEBI" id="CHEBI:18420"/>
    </ligand>
</feature>
<feature type="binding site" evidence="1">
    <location>
        <position position="297"/>
    </location>
    <ligand>
        <name>Mg(2+)</name>
        <dbReference type="ChEBI" id="CHEBI:18420"/>
    </ligand>
</feature>
<feature type="binding site" evidence="1">
    <location>
        <position position="324"/>
    </location>
    <ligand>
        <name>Mg(2+)</name>
        <dbReference type="ChEBI" id="CHEBI:18420"/>
    </ligand>
</feature>
<feature type="binding site" evidence="1">
    <location>
        <position position="349"/>
    </location>
    <ligand>
        <name>(2R)-2-phosphoglycerate</name>
        <dbReference type="ChEBI" id="CHEBI:58289"/>
    </ligand>
</feature>
<feature type="binding site" evidence="1">
    <location>
        <position position="378"/>
    </location>
    <ligand>
        <name>(2R)-2-phosphoglycerate</name>
        <dbReference type="ChEBI" id="CHEBI:58289"/>
    </ligand>
</feature>
<feature type="binding site" evidence="1">
    <location>
        <position position="379"/>
    </location>
    <ligand>
        <name>(2R)-2-phosphoglycerate</name>
        <dbReference type="ChEBI" id="CHEBI:58289"/>
    </ligand>
</feature>
<feature type="binding site" evidence="1">
    <location>
        <position position="400"/>
    </location>
    <ligand>
        <name>(2R)-2-phosphoglycerate</name>
        <dbReference type="ChEBI" id="CHEBI:58289"/>
    </ligand>
</feature>
<keyword id="KW-0963">Cytoplasm</keyword>
<keyword id="KW-0324">Glycolysis</keyword>
<keyword id="KW-0456">Lyase</keyword>
<keyword id="KW-0460">Magnesium</keyword>
<keyword id="KW-0479">Metal-binding</keyword>
<keyword id="KW-1185">Reference proteome</keyword>
<keyword id="KW-0964">Secreted</keyword>
<accession>Q4FR74</accession>
<comment type="function">
    <text evidence="1">Catalyzes the reversible conversion of 2-phosphoglycerate (2-PG) into phosphoenolpyruvate (PEP). It is essential for the degradation of carbohydrates via glycolysis.</text>
</comment>
<comment type="catalytic activity">
    <reaction evidence="1">
        <text>(2R)-2-phosphoglycerate = phosphoenolpyruvate + H2O</text>
        <dbReference type="Rhea" id="RHEA:10164"/>
        <dbReference type="ChEBI" id="CHEBI:15377"/>
        <dbReference type="ChEBI" id="CHEBI:58289"/>
        <dbReference type="ChEBI" id="CHEBI:58702"/>
        <dbReference type="EC" id="4.2.1.11"/>
    </reaction>
</comment>
<comment type="cofactor">
    <cofactor evidence="1">
        <name>Mg(2+)</name>
        <dbReference type="ChEBI" id="CHEBI:18420"/>
    </cofactor>
    <text evidence="1">Binds a second Mg(2+) ion via substrate during catalysis.</text>
</comment>
<comment type="pathway">
    <text evidence="1">Carbohydrate degradation; glycolysis; pyruvate from D-glyceraldehyde 3-phosphate: step 4/5.</text>
</comment>
<comment type="subunit">
    <text evidence="1">Component of the RNA degradosome, a multiprotein complex involved in RNA processing and mRNA degradation.</text>
</comment>
<comment type="subcellular location">
    <subcellularLocation>
        <location evidence="1">Cytoplasm</location>
    </subcellularLocation>
    <subcellularLocation>
        <location evidence="1">Secreted</location>
    </subcellularLocation>
    <subcellularLocation>
        <location evidence="1">Cell surface</location>
    </subcellularLocation>
    <text evidence="1">Fractions of enolase are present in both the cytoplasm and on the cell surface.</text>
</comment>
<comment type="similarity">
    <text evidence="1">Belongs to the enolase family.</text>
</comment>